<accession>Q2FHM9</accession>
<sequence length="207" mass="24037">MDNEKGLLIVLSGPSGVGKGTVRKRIFEDPSTSYKYSISMTTRQMREGEVDGVDYFFKTRDAFEALIKDDQFIEYAEYVGNYYGTPVQYVKDTMDEGHDVFLEIEVEGAKQVRKKFPDALFIFLAPPSLEHLRERLVGRGTESDEKIQSRINEARKEVEMMNLYDYVVVNDEVELAKNRIQCIVEAEHLKRERVEAKYRKMILEAKK</sequence>
<dbReference type="EC" id="2.7.4.8" evidence="1"/>
<dbReference type="EMBL" id="CP000255">
    <property type="protein sequence ID" value="ABD22076.1"/>
    <property type="molecule type" value="Genomic_DNA"/>
</dbReference>
<dbReference type="RefSeq" id="WP_000368227.1">
    <property type="nucleotide sequence ID" value="NZ_CP027476.1"/>
</dbReference>
<dbReference type="SMR" id="Q2FHM9"/>
<dbReference type="KEGG" id="saa:SAUSA300_1102"/>
<dbReference type="HOGENOM" id="CLU_001715_1_2_9"/>
<dbReference type="OMA" id="EWAVVHG"/>
<dbReference type="Proteomes" id="UP000001939">
    <property type="component" value="Chromosome"/>
</dbReference>
<dbReference type="GO" id="GO:0005829">
    <property type="term" value="C:cytosol"/>
    <property type="evidence" value="ECO:0007669"/>
    <property type="project" value="TreeGrafter"/>
</dbReference>
<dbReference type="GO" id="GO:0005524">
    <property type="term" value="F:ATP binding"/>
    <property type="evidence" value="ECO:0007669"/>
    <property type="project" value="UniProtKB-UniRule"/>
</dbReference>
<dbReference type="GO" id="GO:0004385">
    <property type="term" value="F:guanylate kinase activity"/>
    <property type="evidence" value="ECO:0007669"/>
    <property type="project" value="UniProtKB-UniRule"/>
</dbReference>
<dbReference type="CDD" id="cd00071">
    <property type="entry name" value="GMPK"/>
    <property type="match status" value="1"/>
</dbReference>
<dbReference type="FunFam" id="3.40.50.300:FF:000855">
    <property type="entry name" value="Guanylate kinase"/>
    <property type="match status" value="1"/>
</dbReference>
<dbReference type="FunFam" id="3.30.63.10:FF:000002">
    <property type="entry name" value="Guanylate kinase 1"/>
    <property type="match status" value="1"/>
</dbReference>
<dbReference type="Gene3D" id="3.30.63.10">
    <property type="entry name" value="Guanylate Kinase phosphate binding domain"/>
    <property type="match status" value="1"/>
</dbReference>
<dbReference type="Gene3D" id="3.40.50.300">
    <property type="entry name" value="P-loop containing nucleotide triphosphate hydrolases"/>
    <property type="match status" value="1"/>
</dbReference>
<dbReference type="HAMAP" id="MF_00328">
    <property type="entry name" value="Guanylate_kinase"/>
    <property type="match status" value="1"/>
</dbReference>
<dbReference type="InterPro" id="IPR008145">
    <property type="entry name" value="GK/Ca_channel_bsu"/>
</dbReference>
<dbReference type="InterPro" id="IPR008144">
    <property type="entry name" value="Guanylate_kin-like_dom"/>
</dbReference>
<dbReference type="InterPro" id="IPR017665">
    <property type="entry name" value="Guanylate_kinase"/>
</dbReference>
<dbReference type="InterPro" id="IPR020590">
    <property type="entry name" value="Guanylate_kinase_CS"/>
</dbReference>
<dbReference type="InterPro" id="IPR027417">
    <property type="entry name" value="P-loop_NTPase"/>
</dbReference>
<dbReference type="NCBIfam" id="TIGR03263">
    <property type="entry name" value="guanyl_kin"/>
    <property type="match status" value="1"/>
</dbReference>
<dbReference type="PANTHER" id="PTHR23117:SF13">
    <property type="entry name" value="GUANYLATE KINASE"/>
    <property type="match status" value="1"/>
</dbReference>
<dbReference type="PANTHER" id="PTHR23117">
    <property type="entry name" value="GUANYLATE KINASE-RELATED"/>
    <property type="match status" value="1"/>
</dbReference>
<dbReference type="Pfam" id="PF00625">
    <property type="entry name" value="Guanylate_kin"/>
    <property type="match status" value="1"/>
</dbReference>
<dbReference type="SMART" id="SM00072">
    <property type="entry name" value="GuKc"/>
    <property type="match status" value="1"/>
</dbReference>
<dbReference type="SUPFAM" id="SSF52540">
    <property type="entry name" value="P-loop containing nucleoside triphosphate hydrolases"/>
    <property type="match status" value="1"/>
</dbReference>
<dbReference type="PROSITE" id="PS00856">
    <property type="entry name" value="GUANYLATE_KINASE_1"/>
    <property type="match status" value="1"/>
</dbReference>
<dbReference type="PROSITE" id="PS50052">
    <property type="entry name" value="GUANYLATE_KINASE_2"/>
    <property type="match status" value="1"/>
</dbReference>
<gene>
    <name evidence="1" type="primary">gmk</name>
    <name type="ordered locus">SAUSA300_1102</name>
</gene>
<organism>
    <name type="scientific">Staphylococcus aureus (strain USA300)</name>
    <dbReference type="NCBI Taxonomy" id="367830"/>
    <lineage>
        <taxon>Bacteria</taxon>
        <taxon>Bacillati</taxon>
        <taxon>Bacillota</taxon>
        <taxon>Bacilli</taxon>
        <taxon>Bacillales</taxon>
        <taxon>Staphylococcaceae</taxon>
        <taxon>Staphylococcus</taxon>
    </lineage>
</organism>
<proteinExistence type="inferred from homology"/>
<keyword id="KW-0067">ATP-binding</keyword>
<keyword id="KW-0963">Cytoplasm</keyword>
<keyword id="KW-0418">Kinase</keyword>
<keyword id="KW-0547">Nucleotide-binding</keyword>
<keyword id="KW-0808">Transferase</keyword>
<reference key="1">
    <citation type="journal article" date="2006" name="Lancet">
        <title>Complete genome sequence of USA300, an epidemic clone of community-acquired meticillin-resistant Staphylococcus aureus.</title>
        <authorList>
            <person name="Diep B.A."/>
            <person name="Gill S.R."/>
            <person name="Chang R.F."/>
            <person name="Phan T.H."/>
            <person name="Chen J.H."/>
            <person name="Davidson M.G."/>
            <person name="Lin F."/>
            <person name="Lin J."/>
            <person name="Carleton H.A."/>
            <person name="Mongodin E.F."/>
            <person name="Sensabaugh G.F."/>
            <person name="Perdreau-Remington F."/>
        </authorList>
    </citation>
    <scope>NUCLEOTIDE SEQUENCE [LARGE SCALE GENOMIC DNA]</scope>
    <source>
        <strain>USA300</strain>
    </source>
</reference>
<protein>
    <recommendedName>
        <fullName evidence="1">Guanylate kinase</fullName>
        <ecNumber evidence="1">2.7.4.8</ecNumber>
    </recommendedName>
    <alternativeName>
        <fullName evidence="1">GMP kinase</fullName>
    </alternativeName>
</protein>
<feature type="chain" id="PRO_0000266409" description="Guanylate kinase">
    <location>
        <begin position="1"/>
        <end position="207"/>
    </location>
</feature>
<feature type="domain" description="Guanylate kinase-like" evidence="1">
    <location>
        <begin position="6"/>
        <end position="185"/>
    </location>
</feature>
<feature type="binding site" evidence="1">
    <location>
        <begin position="13"/>
        <end position="20"/>
    </location>
    <ligand>
        <name>ATP</name>
        <dbReference type="ChEBI" id="CHEBI:30616"/>
    </ligand>
</feature>
<evidence type="ECO:0000255" key="1">
    <source>
        <dbReference type="HAMAP-Rule" id="MF_00328"/>
    </source>
</evidence>
<name>KGUA_STAA3</name>
<comment type="function">
    <text evidence="1">Essential for recycling GMP and indirectly, cGMP.</text>
</comment>
<comment type="catalytic activity">
    <reaction evidence="1">
        <text>GMP + ATP = GDP + ADP</text>
        <dbReference type="Rhea" id="RHEA:20780"/>
        <dbReference type="ChEBI" id="CHEBI:30616"/>
        <dbReference type="ChEBI" id="CHEBI:58115"/>
        <dbReference type="ChEBI" id="CHEBI:58189"/>
        <dbReference type="ChEBI" id="CHEBI:456216"/>
        <dbReference type="EC" id="2.7.4.8"/>
    </reaction>
</comment>
<comment type="subcellular location">
    <subcellularLocation>
        <location evidence="1">Cytoplasm</location>
    </subcellularLocation>
</comment>
<comment type="similarity">
    <text evidence="1">Belongs to the guanylate kinase family.</text>
</comment>